<proteinExistence type="inferred from homology"/>
<name>CLPS_PSESM</name>
<reference key="1">
    <citation type="journal article" date="2003" name="Proc. Natl. Acad. Sci. U.S.A.">
        <title>The complete genome sequence of the Arabidopsis and tomato pathogen Pseudomonas syringae pv. tomato DC3000.</title>
        <authorList>
            <person name="Buell C.R."/>
            <person name="Joardar V."/>
            <person name="Lindeberg M."/>
            <person name="Selengut J."/>
            <person name="Paulsen I.T."/>
            <person name="Gwinn M.L."/>
            <person name="Dodson R.J."/>
            <person name="DeBoy R.T."/>
            <person name="Durkin A.S."/>
            <person name="Kolonay J.F."/>
            <person name="Madupu R."/>
            <person name="Daugherty S.C."/>
            <person name="Brinkac L.M."/>
            <person name="Beanan M.J."/>
            <person name="Haft D.H."/>
            <person name="Nelson W.C."/>
            <person name="Davidsen T.M."/>
            <person name="Zafar N."/>
            <person name="Zhou L."/>
            <person name="Liu J."/>
            <person name="Yuan Q."/>
            <person name="Khouri H.M."/>
            <person name="Fedorova N.B."/>
            <person name="Tran B."/>
            <person name="Russell D."/>
            <person name="Berry K.J."/>
            <person name="Utterback T.R."/>
            <person name="Van Aken S.E."/>
            <person name="Feldblyum T.V."/>
            <person name="D'Ascenzo M."/>
            <person name="Deng W.-L."/>
            <person name="Ramos A.R."/>
            <person name="Alfano J.R."/>
            <person name="Cartinhour S."/>
            <person name="Chatterjee A.K."/>
            <person name="Delaney T.P."/>
            <person name="Lazarowitz S.G."/>
            <person name="Martin G.B."/>
            <person name="Schneider D.J."/>
            <person name="Tang X."/>
            <person name="Bender C.L."/>
            <person name="White O."/>
            <person name="Fraser C.M."/>
            <person name="Collmer A."/>
        </authorList>
    </citation>
    <scope>NUCLEOTIDE SEQUENCE [LARGE SCALE GENOMIC DNA]</scope>
    <source>
        <strain>ATCC BAA-871 / DC3000</strain>
    </source>
</reference>
<gene>
    <name evidence="1" type="primary">clpS</name>
    <name type="ordered locus">PSPTO_3354</name>
</gene>
<accession>Q87ZS0</accession>
<keyword id="KW-1185">Reference proteome</keyword>
<organism>
    <name type="scientific">Pseudomonas syringae pv. tomato (strain ATCC BAA-871 / DC3000)</name>
    <dbReference type="NCBI Taxonomy" id="223283"/>
    <lineage>
        <taxon>Bacteria</taxon>
        <taxon>Pseudomonadati</taxon>
        <taxon>Pseudomonadota</taxon>
        <taxon>Gammaproteobacteria</taxon>
        <taxon>Pseudomonadales</taxon>
        <taxon>Pseudomonadaceae</taxon>
        <taxon>Pseudomonas</taxon>
    </lineage>
</organism>
<comment type="function">
    <text evidence="1">Involved in the modulation of the specificity of the ClpAP-mediated ATP-dependent protein degradation.</text>
</comment>
<comment type="subunit">
    <text evidence="1">Binds to the N-terminal domain of the chaperone ClpA.</text>
</comment>
<comment type="similarity">
    <text evidence="1">Belongs to the ClpS family.</text>
</comment>
<sequence length="120" mass="13484">MHAFSKIRLTFNQDGPQSHEDDSAGIAVQDAKPTLQAPPMYKVVLFNDDYTPMDFVVEVLEVFFNLNRELATKVMLAVHTEGRAVCGLFTRDIAETKAAQVNQYARESQHPLLCEIEKDG</sequence>
<evidence type="ECO:0000255" key="1">
    <source>
        <dbReference type="HAMAP-Rule" id="MF_00302"/>
    </source>
</evidence>
<protein>
    <recommendedName>
        <fullName evidence="1">ATP-dependent Clp protease adapter protein ClpS</fullName>
    </recommendedName>
</protein>
<feature type="chain" id="PRO_0000215736" description="ATP-dependent Clp protease adapter protein ClpS">
    <location>
        <begin position="1"/>
        <end position="120"/>
    </location>
</feature>
<dbReference type="EMBL" id="AE016853">
    <property type="protein sequence ID" value="AAO56832.1"/>
    <property type="molecule type" value="Genomic_DNA"/>
</dbReference>
<dbReference type="RefSeq" id="NP_793137.1">
    <property type="nucleotide sequence ID" value="NC_004578.1"/>
</dbReference>
<dbReference type="RefSeq" id="WP_003380148.1">
    <property type="nucleotide sequence ID" value="NC_004578.1"/>
</dbReference>
<dbReference type="SMR" id="Q87ZS0"/>
<dbReference type="STRING" id="223283.PSPTO_3354"/>
<dbReference type="GeneID" id="61790374"/>
<dbReference type="KEGG" id="pst:PSPTO_3354"/>
<dbReference type="PATRIC" id="fig|223283.9.peg.3433"/>
<dbReference type="eggNOG" id="COG2127">
    <property type="taxonomic scope" value="Bacteria"/>
</dbReference>
<dbReference type="HOGENOM" id="CLU_134358_2_0_6"/>
<dbReference type="OrthoDB" id="9796121at2"/>
<dbReference type="PhylomeDB" id="Q87ZS0"/>
<dbReference type="Proteomes" id="UP000002515">
    <property type="component" value="Chromosome"/>
</dbReference>
<dbReference type="GO" id="GO:0030163">
    <property type="term" value="P:protein catabolic process"/>
    <property type="evidence" value="ECO:0007669"/>
    <property type="project" value="InterPro"/>
</dbReference>
<dbReference type="GO" id="GO:0006508">
    <property type="term" value="P:proteolysis"/>
    <property type="evidence" value="ECO:0007669"/>
    <property type="project" value="UniProtKB-UniRule"/>
</dbReference>
<dbReference type="FunFam" id="3.30.1390.10:FF:000002">
    <property type="entry name" value="ATP-dependent Clp protease adapter protein ClpS"/>
    <property type="match status" value="1"/>
</dbReference>
<dbReference type="Gene3D" id="3.30.1390.10">
    <property type="match status" value="1"/>
</dbReference>
<dbReference type="HAMAP" id="MF_00302">
    <property type="entry name" value="ClpS"/>
    <property type="match status" value="1"/>
</dbReference>
<dbReference type="InterPro" id="IPR022935">
    <property type="entry name" value="ClpS"/>
</dbReference>
<dbReference type="InterPro" id="IPR003769">
    <property type="entry name" value="ClpS_core"/>
</dbReference>
<dbReference type="InterPro" id="IPR014719">
    <property type="entry name" value="Ribosomal_bL12_C/ClpS-like"/>
</dbReference>
<dbReference type="NCBIfam" id="NF000669">
    <property type="entry name" value="PRK00033.1-2"/>
    <property type="match status" value="1"/>
</dbReference>
<dbReference type="NCBIfam" id="NF000672">
    <property type="entry name" value="PRK00033.1-5"/>
    <property type="match status" value="1"/>
</dbReference>
<dbReference type="PANTHER" id="PTHR33473:SF19">
    <property type="entry name" value="ATP-DEPENDENT CLP PROTEASE ADAPTER PROTEIN CLPS"/>
    <property type="match status" value="1"/>
</dbReference>
<dbReference type="PANTHER" id="PTHR33473">
    <property type="entry name" value="ATP-DEPENDENT CLP PROTEASE ADAPTER PROTEIN CLPS1, CHLOROPLASTIC"/>
    <property type="match status" value="1"/>
</dbReference>
<dbReference type="Pfam" id="PF02617">
    <property type="entry name" value="ClpS"/>
    <property type="match status" value="1"/>
</dbReference>
<dbReference type="SUPFAM" id="SSF54736">
    <property type="entry name" value="ClpS-like"/>
    <property type="match status" value="1"/>
</dbReference>